<evidence type="ECO:0000255" key="1">
    <source>
        <dbReference type="HAMAP-Rule" id="MF_00141"/>
    </source>
</evidence>
<proteinExistence type="inferred from homology"/>
<feature type="chain" id="PRO_1000010708" description="Elongation factor P">
    <location>
        <begin position="1"/>
        <end position="189"/>
    </location>
</feature>
<gene>
    <name evidence="1" type="primary">efp</name>
    <name type="ordered locus">CFF8240_1247</name>
</gene>
<name>EFP_CAMFF</name>
<comment type="function">
    <text evidence="1">Involved in peptide bond synthesis. Stimulates efficient translation and peptide-bond synthesis on native or reconstituted 70S ribosomes in vitro. Probably functions indirectly by altering the affinity of the ribosome for aminoacyl-tRNA, thus increasing their reactivity as acceptors for peptidyl transferase.</text>
</comment>
<comment type="pathway">
    <text evidence="1">Protein biosynthesis; polypeptide chain elongation.</text>
</comment>
<comment type="subcellular location">
    <subcellularLocation>
        <location evidence="1">Cytoplasm</location>
    </subcellularLocation>
</comment>
<comment type="similarity">
    <text evidence="1">Belongs to the elongation factor P family.</text>
</comment>
<protein>
    <recommendedName>
        <fullName evidence="1">Elongation factor P</fullName>
        <shortName evidence="1">EF-P</shortName>
    </recommendedName>
</protein>
<dbReference type="EMBL" id="CP000487">
    <property type="protein sequence ID" value="ABK81879.1"/>
    <property type="molecule type" value="Genomic_DNA"/>
</dbReference>
<dbReference type="RefSeq" id="WP_002850016.1">
    <property type="nucleotide sequence ID" value="NC_008599.1"/>
</dbReference>
<dbReference type="SMR" id="A0RQC0"/>
<dbReference type="GeneID" id="61065072"/>
<dbReference type="KEGG" id="cff:CFF8240_1247"/>
<dbReference type="eggNOG" id="COG0231">
    <property type="taxonomic scope" value="Bacteria"/>
</dbReference>
<dbReference type="HOGENOM" id="CLU_074944_0_1_7"/>
<dbReference type="UniPathway" id="UPA00345"/>
<dbReference type="Proteomes" id="UP000000760">
    <property type="component" value="Chromosome"/>
</dbReference>
<dbReference type="GO" id="GO:0005737">
    <property type="term" value="C:cytoplasm"/>
    <property type="evidence" value="ECO:0007669"/>
    <property type="project" value="UniProtKB-SubCell"/>
</dbReference>
<dbReference type="GO" id="GO:0003746">
    <property type="term" value="F:translation elongation factor activity"/>
    <property type="evidence" value="ECO:0007669"/>
    <property type="project" value="UniProtKB-UniRule"/>
</dbReference>
<dbReference type="GO" id="GO:0043043">
    <property type="term" value="P:peptide biosynthetic process"/>
    <property type="evidence" value="ECO:0007669"/>
    <property type="project" value="InterPro"/>
</dbReference>
<dbReference type="CDD" id="cd04470">
    <property type="entry name" value="S1_EF-P_repeat_1"/>
    <property type="match status" value="1"/>
</dbReference>
<dbReference type="CDD" id="cd05794">
    <property type="entry name" value="S1_EF-P_repeat_2"/>
    <property type="match status" value="1"/>
</dbReference>
<dbReference type="FunFam" id="2.30.30.30:FF:000003">
    <property type="entry name" value="Elongation factor P"/>
    <property type="match status" value="1"/>
</dbReference>
<dbReference type="FunFam" id="2.40.50.140:FF:000004">
    <property type="entry name" value="Elongation factor P"/>
    <property type="match status" value="1"/>
</dbReference>
<dbReference type="FunFam" id="2.40.50.140:FF:000009">
    <property type="entry name" value="Elongation factor P"/>
    <property type="match status" value="1"/>
</dbReference>
<dbReference type="Gene3D" id="2.30.30.30">
    <property type="match status" value="1"/>
</dbReference>
<dbReference type="Gene3D" id="2.40.50.140">
    <property type="entry name" value="Nucleic acid-binding proteins"/>
    <property type="match status" value="2"/>
</dbReference>
<dbReference type="HAMAP" id="MF_00141">
    <property type="entry name" value="EF_P"/>
    <property type="match status" value="1"/>
</dbReference>
<dbReference type="InterPro" id="IPR015365">
    <property type="entry name" value="Elong-fact-P_C"/>
</dbReference>
<dbReference type="InterPro" id="IPR012340">
    <property type="entry name" value="NA-bd_OB-fold"/>
</dbReference>
<dbReference type="InterPro" id="IPR014722">
    <property type="entry name" value="Rib_uL2_dom2"/>
</dbReference>
<dbReference type="InterPro" id="IPR020599">
    <property type="entry name" value="Transl_elong_fac_P/YeiP"/>
</dbReference>
<dbReference type="InterPro" id="IPR013185">
    <property type="entry name" value="Transl_elong_KOW-like"/>
</dbReference>
<dbReference type="InterPro" id="IPR001059">
    <property type="entry name" value="Transl_elong_P/YeiP_cen"/>
</dbReference>
<dbReference type="InterPro" id="IPR011768">
    <property type="entry name" value="Transl_elongation_fac_P"/>
</dbReference>
<dbReference type="InterPro" id="IPR008991">
    <property type="entry name" value="Translation_prot_SH3-like_sf"/>
</dbReference>
<dbReference type="NCBIfam" id="TIGR00038">
    <property type="entry name" value="efp"/>
    <property type="match status" value="1"/>
</dbReference>
<dbReference type="NCBIfam" id="NF001810">
    <property type="entry name" value="PRK00529.1"/>
    <property type="match status" value="1"/>
</dbReference>
<dbReference type="PANTHER" id="PTHR30053">
    <property type="entry name" value="ELONGATION FACTOR P"/>
    <property type="match status" value="1"/>
</dbReference>
<dbReference type="PANTHER" id="PTHR30053:SF12">
    <property type="entry name" value="ELONGATION FACTOR P (EF-P) FAMILY PROTEIN"/>
    <property type="match status" value="1"/>
</dbReference>
<dbReference type="Pfam" id="PF01132">
    <property type="entry name" value="EFP"/>
    <property type="match status" value="1"/>
</dbReference>
<dbReference type="Pfam" id="PF08207">
    <property type="entry name" value="EFP_N"/>
    <property type="match status" value="1"/>
</dbReference>
<dbReference type="Pfam" id="PF09285">
    <property type="entry name" value="Elong-fact-P_C"/>
    <property type="match status" value="1"/>
</dbReference>
<dbReference type="PIRSF" id="PIRSF005901">
    <property type="entry name" value="EF-P"/>
    <property type="match status" value="1"/>
</dbReference>
<dbReference type="SMART" id="SM01185">
    <property type="entry name" value="EFP"/>
    <property type="match status" value="1"/>
</dbReference>
<dbReference type="SMART" id="SM00841">
    <property type="entry name" value="Elong-fact-P_C"/>
    <property type="match status" value="1"/>
</dbReference>
<dbReference type="SUPFAM" id="SSF50249">
    <property type="entry name" value="Nucleic acid-binding proteins"/>
    <property type="match status" value="2"/>
</dbReference>
<dbReference type="SUPFAM" id="SSF50104">
    <property type="entry name" value="Translation proteins SH3-like domain"/>
    <property type="match status" value="1"/>
</dbReference>
<sequence>MASYSMGDLKKGLKIELDGVPYKIVEYQHVKPGKGAAFVRVKIKSFVNGKVLEKTFHAGDKCESPNLVEKEMQYLYDDGEFCQFMDVESYEQVAISDEDIGEAKKWMIDGMMVQILFHNGKAIGVEVPQVVELKIVETQPNFKGDTQGSNKKPATLESGAVVQIPFHVLEGEVIRVDTVRGEYIERANK</sequence>
<reference key="1">
    <citation type="submission" date="2006-11" db="EMBL/GenBank/DDBJ databases">
        <title>Sequence of Campylobacter fetus subsp. fetus 82-40.</title>
        <authorList>
            <person name="Fouts D.E."/>
            <person name="Nelson K.E."/>
        </authorList>
    </citation>
    <scope>NUCLEOTIDE SEQUENCE [LARGE SCALE GENOMIC DNA]</scope>
    <source>
        <strain>82-40</strain>
    </source>
</reference>
<accession>A0RQC0</accession>
<organism>
    <name type="scientific">Campylobacter fetus subsp. fetus (strain 82-40)</name>
    <dbReference type="NCBI Taxonomy" id="360106"/>
    <lineage>
        <taxon>Bacteria</taxon>
        <taxon>Pseudomonadati</taxon>
        <taxon>Campylobacterota</taxon>
        <taxon>Epsilonproteobacteria</taxon>
        <taxon>Campylobacterales</taxon>
        <taxon>Campylobacteraceae</taxon>
        <taxon>Campylobacter</taxon>
    </lineage>
</organism>
<keyword id="KW-0963">Cytoplasm</keyword>
<keyword id="KW-0251">Elongation factor</keyword>
<keyword id="KW-0648">Protein biosynthesis</keyword>